<name>OLA1_HUMAN</name>
<reference key="1">
    <citation type="journal article" date="2010" name="Mol. Cancer Res.">
        <title>DOC45, a novel DNA damage-regulated nucleocytoplasmic ATPase that is overexpressed in multiple human malignancies.</title>
        <authorList>
            <person name="Sun H."/>
            <person name="Luo X."/>
            <person name="Montalbano J."/>
            <person name="Jin W."/>
            <person name="Shi J."/>
            <person name="Sheikh M.S."/>
            <person name="Huang Y."/>
        </authorList>
    </citation>
    <scope>NUCLEOTIDE SEQUENCE [MRNA] (ISOFORM 1)</scope>
    <scope>SUBCELLULAR LOCATION</scope>
    <scope>INDUCTION</scope>
</reference>
<reference key="2">
    <citation type="submission" date="1999-03" db="EMBL/GenBank/DDBJ databases">
        <title>Cloning of a new human cDNA homologous to Caenorhabditis elegans putative GTP-binding protein.</title>
        <authorList>
            <person name="Yue P."/>
            <person name="Yu L."/>
            <person name="Zhao S.Y."/>
        </authorList>
    </citation>
    <scope>NUCLEOTIDE SEQUENCE [MRNA] (ISOFORM 1)</scope>
</reference>
<reference key="3">
    <citation type="journal article" date="2001" name="Genome Res.">
        <title>Towards a catalog of human genes and proteins: sequencing and analysis of 500 novel complete protein coding human cDNAs.</title>
        <authorList>
            <person name="Wiemann S."/>
            <person name="Weil B."/>
            <person name="Wellenreuther R."/>
            <person name="Gassenhuber J."/>
            <person name="Glassl S."/>
            <person name="Ansorge W."/>
            <person name="Boecher M."/>
            <person name="Bloecker H."/>
            <person name="Bauersachs S."/>
            <person name="Blum H."/>
            <person name="Lauber J."/>
            <person name="Duesterhoeft A."/>
            <person name="Beyer A."/>
            <person name="Koehrer K."/>
            <person name="Strack N."/>
            <person name="Mewes H.-W."/>
            <person name="Ottenwaelder B."/>
            <person name="Obermaier B."/>
            <person name="Tampe J."/>
            <person name="Heubner D."/>
            <person name="Wambutt R."/>
            <person name="Korn B."/>
            <person name="Klein M."/>
            <person name="Poustka A."/>
        </authorList>
    </citation>
    <scope>NUCLEOTIDE SEQUENCE [LARGE SCALE MRNA] (ISOFORM 1)</scope>
    <source>
        <tissue>Amygdala</tissue>
    </source>
</reference>
<reference key="4">
    <citation type="submission" date="1998-07" db="EMBL/GenBank/DDBJ databases">
        <title>Human homologous yeast-44.2 protein, complete cds.</title>
        <authorList>
            <person name="Zhang Q."/>
            <person name="Huang Q."/>
            <person name="Song H."/>
            <person name="Peng J."/>
            <person name="Fu G."/>
            <person name="Mao M."/>
            <person name="Dai M."/>
            <person name="Mao Y."/>
            <person name="Zhou J."/>
            <person name="Chen Z."/>
            <person name="Chen J."/>
            <person name="Luo M."/>
            <person name="Hu R."/>
        </authorList>
    </citation>
    <scope>NUCLEOTIDE SEQUENCE [LARGE SCALE MRNA] (ISOFORM 1)</scope>
    <source>
        <tissue>Pituitary tumor</tissue>
    </source>
</reference>
<reference key="5">
    <citation type="submission" date="1998-12" db="EMBL/GenBank/DDBJ databases">
        <title>Functional prediction of the coding sequences of 121 new genes deduced by analysis of cDNA clones from human fetal liver.</title>
        <authorList>
            <person name="Zhang C."/>
            <person name="Yu Y."/>
            <person name="Zhang S."/>
            <person name="Wei H."/>
            <person name="Zhou G."/>
            <person name="Ouyang S."/>
            <person name="Luo L."/>
            <person name="Bi J."/>
            <person name="Liu M."/>
            <person name="He F."/>
        </authorList>
    </citation>
    <scope>NUCLEOTIDE SEQUENCE [LARGE SCALE MRNA] (ISOFORM 2)</scope>
    <source>
        <tissue>Fetal liver</tissue>
    </source>
</reference>
<reference key="6">
    <citation type="journal article" date="2004" name="Nat. Genet.">
        <title>Complete sequencing and characterization of 21,243 full-length human cDNAs.</title>
        <authorList>
            <person name="Ota T."/>
            <person name="Suzuki Y."/>
            <person name="Nishikawa T."/>
            <person name="Otsuki T."/>
            <person name="Sugiyama T."/>
            <person name="Irie R."/>
            <person name="Wakamatsu A."/>
            <person name="Hayashi K."/>
            <person name="Sato H."/>
            <person name="Nagai K."/>
            <person name="Kimura K."/>
            <person name="Makita H."/>
            <person name="Sekine M."/>
            <person name="Obayashi M."/>
            <person name="Nishi T."/>
            <person name="Shibahara T."/>
            <person name="Tanaka T."/>
            <person name="Ishii S."/>
            <person name="Yamamoto J."/>
            <person name="Saito K."/>
            <person name="Kawai Y."/>
            <person name="Isono Y."/>
            <person name="Nakamura Y."/>
            <person name="Nagahari K."/>
            <person name="Murakami K."/>
            <person name="Yasuda T."/>
            <person name="Iwayanagi T."/>
            <person name="Wagatsuma M."/>
            <person name="Shiratori A."/>
            <person name="Sudo H."/>
            <person name="Hosoiri T."/>
            <person name="Kaku Y."/>
            <person name="Kodaira H."/>
            <person name="Kondo H."/>
            <person name="Sugawara M."/>
            <person name="Takahashi M."/>
            <person name="Kanda K."/>
            <person name="Yokoi T."/>
            <person name="Furuya T."/>
            <person name="Kikkawa E."/>
            <person name="Omura Y."/>
            <person name="Abe K."/>
            <person name="Kamihara K."/>
            <person name="Katsuta N."/>
            <person name="Sato K."/>
            <person name="Tanikawa M."/>
            <person name="Yamazaki M."/>
            <person name="Ninomiya K."/>
            <person name="Ishibashi T."/>
            <person name="Yamashita H."/>
            <person name="Murakawa K."/>
            <person name="Fujimori K."/>
            <person name="Tanai H."/>
            <person name="Kimata M."/>
            <person name="Watanabe M."/>
            <person name="Hiraoka S."/>
            <person name="Chiba Y."/>
            <person name="Ishida S."/>
            <person name="Ono Y."/>
            <person name="Takiguchi S."/>
            <person name="Watanabe S."/>
            <person name="Yosida M."/>
            <person name="Hotuta T."/>
            <person name="Kusano J."/>
            <person name="Kanehori K."/>
            <person name="Takahashi-Fujii A."/>
            <person name="Hara H."/>
            <person name="Tanase T.-O."/>
            <person name="Nomura Y."/>
            <person name="Togiya S."/>
            <person name="Komai F."/>
            <person name="Hara R."/>
            <person name="Takeuchi K."/>
            <person name="Arita M."/>
            <person name="Imose N."/>
            <person name="Musashino K."/>
            <person name="Yuuki H."/>
            <person name="Oshima A."/>
            <person name="Sasaki N."/>
            <person name="Aotsuka S."/>
            <person name="Yoshikawa Y."/>
            <person name="Matsunawa H."/>
            <person name="Ichihara T."/>
            <person name="Shiohata N."/>
            <person name="Sano S."/>
            <person name="Moriya S."/>
            <person name="Momiyama H."/>
            <person name="Satoh N."/>
            <person name="Takami S."/>
            <person name="Terashima Y."/>
            <person name="Suzuki O."/>
            <person name="Nakagawa S."/>
            <person name="Senoh A."/>
            <person name="Mizoguchi H."/>
            <person name="Goto Y."/>
            <person name="Shimizu F."/>
            <person name="Wakebe H."/>
            <person name="Hishigaki H."/>
            <person name="Watanabe T."/>
            <person name="Sugiyama A."/>
            <person name="Takemoto M."/>
            <person name="Kawakami B."/>
            <person name="Yamazaki M."/>
            <person name="Watanabe K."/>
            <person name="Kumagai A."/>
            <person name="Itakura S."/>
            <person name="Fukuzumi Y."/>
            <person name="Fujimori Y."/>
            <person name="Komiyama M."/>
            <person name="Tashiro H."/>
            <person name="Tanigami A."/>
            <person name="Fujiwara T."/>
            <person name="Ono T."/>
            <person name="Yamada K."/>
            <person name="Fujii Y."/>
            <person name="Ozaki K."/>
            <person name="Hirao M."/>
            <person name="Ohmori Y."/>
            <person name="Kawabata A."/>
            <person name="Hikiji T."/>
            <person name="Kobatake N."/>
            <person name="Inagaki H."/>
            <person name="Ikema Y."/>
            <person name="Okamoto S."/>
            <person name="Okitani R."/>
            <person name="Kawakami T."/>
            <person name="Noguchi S."/>
            <person name="Itoh T."/>
            <person name="Shigeta K."/>
            <person name="Senba T."/>
            <person name="Matsumura K."/>
            <person name="Nakajima Y."/>
            <person name="Mizuno T."/>
            <person name="Morinaga M."/>
            <person name="Sasaki M."/>
            <person name="Togashi T."/>
            <person name="Oyama M."/>
            <person name="Hata H."/>
            <person name="Watanabe M."/>
            <person name="Komatsu T."/>
            <person name="Mizushima-Sugano J."/>
            <person name="Satoh T."/>
            <person name="Shirai Y."/>
            <person name="Takahashi Y."/>
            <person name="Nakagawa K."/>
            <person name="Okumura K."/>
            <person name="Nagase T."/>
            <person name="Nomura N."/>
            <person name="Kikuchi H."/>
            <person name="Masuho Y."/>
            <person name="Yamashita R."/>
            <person name="Nakai K."/>
            <person name="Yada T."/>
            <person name="Nakamura Y."/>
            <person name="Ohara O."/>
            <person name="Isogai T."/>
            <person name="Sugano S."/>
        </authorList>
    </citation>
    <scope>NUCLEOTIDE SEQUENCE [LARGE SCALE MRNA] (ISOFORMS 1 AND 2)</scope>
    <source>
        <tissue>Teratocarcinoma</tissue>
    </source>
</reference>
<reference key="7">
    <citation type="submission" date="2005-09" db="EMBL/GenBank/DDBJ databases">
        <authorList>
            <person name="Mural R.J."/>
            <person name="Istrail S."/>
            <person name="Sutton G."/>
            <person name="Florea L."/>
            <person name="Halpern A.L."/>
            <person name="Mobarry C.M."/>
            <person name="Lippert R."/>
            <person name="Walenz B."/>
            <person name="Shatkay H."/>
            <person name="Dew I."/>
            <person name="Miller J.R."/>
            <person name="Flanigan M.J."/>
            <person name="Edwards N.J."/>
            <person name="Bolanos R."/>
            <person name="Fasulo D."/>
            <person name="Halldorsson B.V."/>
            <person name="Hannenhalli S."/>
            <person name="Turner R."/>
            <person name="Yooseph S."/>
            <person name="Lu F."/>
            <person name="Nusskern D.R."/>
            <person name="Shue B.C."/>
            <person name="Zheng X.H."/>
            <person name="Zhong F."/>
            <person name="Delcher A.L."/>
            <person name="Huson D.H."/>
            <person name="Kravitz S.A."/>
            <person name="Mouchard L."/>
            <person name="Reinert K."/>
            <person name="Remington K.A."/>
            <person name="Clark A.G."/>
            <person name="Waterman M.S."/>
            <person name="Eichler E.E."/>
            <person name="Adams M.D."/>
            <person name="Hunkapiller M.W."/>
            <person name="Myers E.W."/>
            <person name="Venter J.C."/>
        </authorList>
    </citation>
    <scope>NUCLEOTIDE SEQUENCE [LARGE SCALE GENOMIC DNA]</scope>
</reference>
<reference key="8">
    <citation type="journal article" date="2004" name="Genome Res.">
        <title>The status, quality, and expansion of the NIH full-length cDNA project: the Mammalian Gene Collection (MGC).</title>
        <authorList>
            <consortium name="The MGC Project Team"/>
        </authorList>
    </citation>
    <scope>NUCLEOTIDE SEQUENCE [LARGE SCALE MRNA] (ISOFORMS 1 AND 3)</scope>
    <source>
        <tissue>Brain</tissue>
        <tissue>Ovary</tissue>
        <tissue>Testis</tissue>
        <tissue>Urinary bladder</tissue>
    </source>
</reference>
<reference key="9">
    <citation type="journal article" date="2009" name="Science">
        <title>Lysine acetylation targets protein complexes and co-regulates major cellular functions.</title>
        <authorList>
            <person name="Choudhary C."/>
            <person name="Kumar C."/>
            <person name="Gnad F."/>
            <person name="Nielsen M.L."/>
            <person name="Rehman M."/>
            <person name="Walther T.C."/>
            <person name="Olsen J.V."/>
            <person name="Mann M."/>
        </authorList>
    </citation>
    <scope>ACETYLATION [LARGE SCALE ANALYSIS] AT LYS-294</scope>
    <scope>IDENTIFICATION BY MASS SPECTROMETRY [LARGE SCALE ANALYSIS]</scope>
</reference>
<reference key="10">
    <citation type="journal article" date="2011" name="BMC Syst. Biol.">
        <title>Initial characterization of the human central proteome.</title>
        <authorList>
            <person name="Burkard T.R."/>
            <person name="Planyavsky M."/>
            <person name="Kaupe I."/>
            <person name="Breitwieser F.P."/>
            <person name="Buerckstuemmer T."/>
            <person name="Bennett K.L."/>
            <person name="Superti-Furga G."/>
            <person name="Colinge J."/>
        </authorList>
    </citation>
    <scope>IDENTIFICATION BY MASS SPECTROMETRY [LARGE SCALE ANALYSIS]</scope>
</reference>
<reference key="11">
    <citation type="journal article" date="2014" name="J. Proteomics">
        <title>An enzyme assisted RP-RPLC approach for in-depth analysis of human liver phosphoproteome.</title>
        <authorList>
            <person name="Bian Y."/>
            <person name="Song C."/>
            <person name="Cheng K."/>
            <person name="Dong M."/>
            <person name="Wang F."/>
            <person name="Huang J."/>
            <person name="Sun D."/>
            <person name="Wang L."/>
            <person name="Ye M."/>
            <person name="Zou H."/>
        </authorList>
    </citation>
    <scope>IDENTIFICATION BY MASS SPECTROMETRY [LARGE SCALE ANALYSIS]</scope>
    <source>
        <tissue>Liver</tissue>
    </source>
</reference>
<reference key="12">
    <citation type="journal article" date="2015" name="Proteomics">
        <title>N-terminome analysis of the human mitochondrial proteome.</title>
        <authorList>
            <person name="Vaca Jacome A.S."/>
            <person name="Rabilloud T."/>
            <person name="Schaeffer-Reiss C."/>
            <person name="Rompais M."/>
            <person name="Ayoub D."/>
            <person name="Lane L."/>
            <person name="Bairoch A."/>
            <person name="Van Dorsselaer A."/>
            <person name="Carapito C."/>
        </authorList>
    </citation>
    <scope>IDENTIFICATION BY MASS SPECTROMETRY [LARGE SCALE ANALYSIS]</scope>
</reference>
<reference key="13">
    <citation type="journal article" date="2007" name="J. Biol. Chem.">
        <title>Human OLA1 defines an ATPase subfamily in the Obg family of GTP-binding proteins.</title>
        <authorList>
            <person name="Koller-Eichhorn R."/>
            <person name="Marquardt T."/>
            <person name="Gail R."/>
            <person name="Wittinghofer A."/>
            <person name="Kostrewa D."/>
            <person name="Kutay U."/>
            <person name="Kambach C."/>
        </authorList>
    </citation>
    <scope>X-RAY CRYSTALLOGRAPHY (2.7 ANGSTROMS) IN COMPLEX WITH ATP ANALOG</scope>
    <scope>SUBUNIT</scope>
    <scope>MUTAGENESIS OF PHE-127; ASN-230 AND 231-LEU--GLU-233</scope>
</reference>
<reference key="14">
    <citation type="journal article" date="2006" name="Science">
        <title>The consensus coding sequences of human breast and colorectal cancers.</title>
        <authorList>
            <person name="Sjoeblom T."/>
            <person name="Jones S."/>
            <person name="Wood L.D."/>
            <person name="Parsons D.W."/>
            <person name="Lin J."/>
            <person name="Barber T.D."/>
            <person name="Mandelker D."/>
            <person name="Leary R.J."/>
            <person name="Ptak J."/>
            <person name="Silliman N."/>
            <person name="Szabo S."/>
            <person name="Buckhaults P."/>
            <person name="Farrell C."/>
            <person name="Meeh P."/>
            <person name="Markowitz S.D."/>
            <person name="Willis J."/>
            <person name="Dawson D."/>
            <person name="Willson J.K.V."/>
            <person name="Gazdar A.F."/>
            <person name="Hartigan J."/>
            <person name="Wu L."/>
            <person name="Liu C."/>
            <person name="Parmigiani G."/>
            <person name="Park B.H."/>
            <person name="Bachman K.E."/>
            <person name="Papadopoulos N."/>
            <person name="Vogelstein B."/>
            <person name="Kinzler K.W."/>
            <person name="Velculescu V.E."/>
        </authorList>
    </citation>
    <scope>VARIANT [LARGE SCALE ANALYSIS] GLN-168</scope>
</reference>
<feature type="chain" id="PRO_0000122456" description="Obg-like ATPase 1">
    <location>
        <begin position="1"/>
        <end position="396"/>
    </location>
</feature>
<feature type="domain" description="OBG-type G" evidence="2">
    <location>
        <begin position="23"/>
        <end position="283"/>
    </location>
</feature>
<feature type="domain" description="TGS" evidence="3">
    <location>
        <begin position="304"/>
        <end position="387"/>
    </location>
</feature>
<feature type="short sequence motif" description="Nuclear export signal" evidence="1">
    <location>
        <begin position="267"/>
        <end position="274"/>
    </location>
</feature>
<feature type="binding site" evidence="11">
    <location>
        <begin position="32"/>
        <end position="37"/>
    </location>
    <ligand>
        <name>ATP</name>
        <dbReference type="ChEBI" id="CHEBI:30616"/>
    </ligand>
</feature>
<feature type="binding site" evidence="2">
    <location>
        <position position="36"/>
    </location>
    <ligand>
        <name>Mg(2+)</name>
        <dbReference type="ChEBI" id="CHEBI:18420"/>
    </ligand>
</feature>
<feature type="binding site" evidence="2">
    <location>
        <position position="56"/>
    </location>
    <ligand>
        <name>Mg(2+)</name>
        <dbReference type="ChEBI" id="CHEBI:18420"/>
    </ligand>
</feature>
<feature type="binding site" evidence="11">
    <location>
        <position position="231"/>
    </location>
    <ligand>
        <name>ATP</name>
        <dbReference type="ChEBI" id="CHEBI:30616"/>
    </ligand>
</feature>
<feature type="modified residue" description="N6-acetyllysine" evidence="12">
    <location>
        <position position="294"/>
    </location>
</feature>
<feature type="splice variant" id="VSP_002049" description="In isoform 2." evidence="7 9">
    <location>
        <begin position="1"/>
        <end position="158"/>
    </location>
</feature>
<feature type="splice variant" id="VSP_002050" description="In isoform 3." evidence="8">
    <original>IKIKEWVDKYDPGALVIPFSGALELKLQELSAEE</original>
    <variation>LESTDNKAEIILLKMEILSSSNLTHLNNRRRNKI</variation>
    <location>
        <begin position="245"/>
        <end position="278"/>
    </location>
</feature>
<feature type="splice variant" id="VSP_002051" description="In isoform 3." evidence="8">
    <location>
        <begin position="279"/>
        <end position="396"/>
    </location>
</feature>
<feature type="sequence variant" id="VAR_036613" description="In a breast cancer sample; somatic mutation." evidence="4">
    <original>E</original>
    <variation>Q</variation>
    <location>
        <position position="168"/>
    </location>
</feature>
<feature type="mutagenesis site" description="Loss of ATP-binding." evidence="5">
    <original>F</original>
    <variation>A</variation>
    <location>
        <position position="127"/>
    </location>
</feature>
<feature type="mutagenesis site" description="Loss of ATP-binding." evidence="5">
    <original>N</original>
    <variation>A</variation>
    <location>
        <position position="230"/>
    </location>
</feature>
<feature type="mutagenesis site" description="Retention of ATP-binding specificity." evidence="5">
    <original>LSE</original>
    <variation>KSD</variation>
    <location>
        <begin position="231"/>
        <end position="233"/>
    </location>
</feature>
<feature type="sequence conflict" description="In Ref. 6; BAB55174." evidence="10" ref="6">
    <original>V</original>
    <variation>A</variation>
    <location>
        <position position="33"/>
    </location>
</feature>
<feature type="sequence conflict" description="In Ref. 4; AAD44500." evidence="10" ref="4">
    <original>V</original>
    <variation>A</variation>
    <location>
        <position position="97"/>
    </location>
</feature>
<feature type="sequence conflict" description="In Ref. 3; CAB66481." evidence="10" ref="3">
    <original>Y</original>
    <variation>C</variation>
    <location>
        <position position="254"/>
    </location>
</feature>
<feature type="sequence conflict" description="In Ref. 5; AAF71123." evidence="10" ref="5">
    <original>Q</original>
    <variation>R</variation>
    <location>
        <position position="391"/>
    </location>
</feature>
<feature type="strand" evidence="13">
    <location>
        <begin position="19"/>
        <end position="21"/>
    </location>
</feature>
<feature type="strand" evidence="13">
    <location>
        <begin position="25"/>
        <end position="28"/>
    </location>
</feature>
<feature type="strand" evidence="13">
    <location>
        <begin position="31"/>
        <end position="34"/>
    </location>
</feature>
<feature type="helix" evidence="13">
    <location>
        <begin position="35"/>
        <end position="43"/>
    </location>
</feature>
<feature type="strand" evidence="13">
    <location>
        <begin position="60"/>
        <end position="65"/>
    </location>
</feature>
<feature type="helix" evidence="13">
    <location>
        <begin position="69"/>
        <end position="78"/>
    </location>
</feature>
<feature type="strand" evidence="13">
    <location>
        <begin position="81"/>
        <end position="84"/>
    </location>
</feature>
<feature type="strand" evidence="13">
    <location>
        <begin position="87"/>
        <end position="92"/>
    </location>
</feature>
<feature type="helix" evidence="13">
    <location>
        <begin position="109"/>
        <end position="115"/>
    </location>
</feature>
<feature type="strand" evidence="13">
    <location>
        <begin position="117"/>
        <end position="125"/>
    </location>
</feature>
<feature type="helix" evidence="13">
    <location>
        <begin position="142"/>
        <end position="165"/>
    </location>
</feature>
<feature type="helix" evidence="13">
    <location>
        <begin position="182"/>
        <end position="192"/>
    </location>
</feature>
<feature type="helix" evidence="13">
    <location>
        <begin position="200"/>
        <end position="202"/>
    </location>
</feature>
<feature type="helix" evidence="13">
    <location>
        <begin position="208"/>
        <end position="217"/>
    </location>
</feature>
<feature type="helix" evidence="13">
    <location>
        <begin position="220"/>
        <end position="222"/>
    </location>
</feature>
<feature type="strand" evidence="13">
    <location>
        <begin position="225"/>
        <end position="230"/>
    </location>
</feature>
<feature type="helix" evidence="13">
    <location>
        <begin position="233"/>
        <end position="238"/>
    </location>
</feature>
<feature type="helix" evidence="13">
    <location>
        <begin position="242"/>
        <end position="254"/>
    </location>
</feature>
<feature type="strand" evidence="13">
    <location>
        <begin position="259"/>
        <end position="263"/>
    </location>
</feature>
<feature type="helix" evidence="13">
    <location>
        <begin position="265"/>
        <end position="273"/>
    </location>
</feature>
<feature type="helix" evidence="13">
    <location>
        <begin position="276"/>
        <end position="285"/>
    </location>
</feature>
<feature type="helix" evidence="13">
    <location>
        <begin position="292"/>
        <end position="302"/>
    </location>
</feature>
<feature type="strand" evidence="13">
    <location>
        <begin position="305"/>
        <end position="322"/>
    </location>
</feature>
<feature type="helix" evidence="13">
    <location>
        <begin position="327"/>
        <end position="332"/>
    </location>
</feature>
<feature type="helix" evidence="13">
    <location>
        <begin position="337"/>
        <end position="341"/>
    </location>
</feature>
<feature type="strand" evidence="13">
    <location>
        <begin position="342"/>
        <end position="348"/>
    </location>
</feature>
<feature type="helix" evidence="13">
    <location>
        <begin position="350"/>
        <end position="356"/>
    </location>
</feature>
<feature type="helix" evidence="13">
    <location>
        <begin position="359"/>
        <end position="364"/>
    </location>
</feature>
<feature type="strand" evidence="13">
    <location>
        <begin position="369"/>
        <end position="371"/>
    </location>
</feature>
<feature type="strand" evidence="13">
    <location>
        <begin position="382"/>
        <end position="387"/>
    </location>
</feature>
<organism>
    <name type="scientific">Homo sapiens</name>
    <name type="common">Human</name>
    <dbReference type="NCBI Taxonomy" id="9606"/>
    <lineage>
        <taxon>Eukaryota</taxon>
        <taxon>Metazoa</taxon>
        <taxon>Chordata</taxon>
        <taxon>Craniata</taxon>
        <taxon>Vertebrata</taxon>
        <taxon>Euteleostomi</taxon>
        <taxon>Mammalia</taxon>
        <taxon>Eutheria</taxon>
        <taxon>Euarchontoglires</taxon>
        <taxon>Primates</taxon>
        <taxon>Haplorrhini</taxon>
        <taxon>Catarrhini</taxon>
        <taxon>Hominidae</taxon>
        <taxon>Homo</taxon>
    </lineage>
</organism>
<keyword id="KW-0002">3D-structure</keyword>
<keyword id="KW-0007">Acetylation</keyword>
<keyword id="KW-0025">Alternative splicing</keyword>
<keyword id="KW-0067">ATP-binding</keyword>
<keyword id="KW-0963">Cytoplasm</keyword>
<keyword id="KW-0378">Hydrolase</keyword>
<keyword id="KW-0460">Magnesium</keyword>
<keyword id="KW-0479">Metal-binding</keyword>
<keyword id="KW-0547">Nucleotide-binding</keyword>
<keyword id="KW-0539">Nucleus</keyword>
<keyword id="KW-1267">Proteomics identification</keyword>
<keyword id="KW-1185">Reference proteome</keyword>
<accession>Q9NTK5</accession>
<accession>D7EHM2</accession>
<accession>Q5BJD7</accession>
<accession>Q8NCI8</accession>
<accession>Q96CU1</accession>
<accession>Q96SV2</accession>
<accession>Q9P1D3</accession>
<accession>Q9UNY9</accession>
<accession>Q9Y6G4</accession>
<dbReference type="EMBL" id="DQ250006">
    <property type="protein sequence ID" value="ABB72766.1"/>
    <property type="molecule type" value="mRNA"/>
</dbReference>
<dbReference type="EMBL" id="AF134478">
    <property type="protein sequence ID" value="AAP97255.1"/>
    <property type="molecule type" value="mRNA"/>
</dbReference>
<dbReference type="EMBL" id="AL136546">
    <property type="protein sequence ID" value="CAB66481.1"/>
    <property type="molecule type" value="mRNA"/>
</dbReference>
<dbReference type="EMBL" id="AF078859">
    <property type="protein sequence ID" value="AAD44491.1"/>
    <property type="molecule type" value="mRNA"/>
</dbReference>
<dbReference type="EMBL" id="AF078868">
    <property type="protein sequence ID" value="AAD44500.1"/>
    <property type="molecule type" value="mRNA"/>
</dbReference>
<dbReference type="EMBL" id="AF116703">
    <property type="protein sequence ID" value="AAF71123.1"/>
    <property type="molecule type" value="mRNA"/>
</dbReference>
<dbReference type="EMBL" id="AK027523">
    <property type="protein sequence ID" value="BAB55174.1"/>
    <property type="molecule type" value="mRNA"/>
</dbReference>
<dbReference type="EMBL" id="AK074710">
    <property type="protein sequence ID" value="BAC11153.1"/>
    <property type="molecule type" value="mRNA"/>
</dbReference>
<dbReference type="EMBL" id="CH471058">
    <property type="protein sequence ID" value="EAX11151.1"/>
    <property type="molecule type" value="Genomic_DNA"/>
</dbReference>
<dbReference type="EMBL" id="BC012842">
    <property type="protein sequence ID" value="AAH12842.1"/>
    <property type="molecule type" value="mRNA"/>
</dbReference>
<dbReference type="EMBL" id="BC013925">
    <property type="protein sequence ID" value="AAH13925.1"/>
    <property type="molecule type" value="mRNA"/>
</dbReference>
<dbReference type="EMBL" id="BC029376">
    <property type="protein sequence ID" value="AAH29376.1"/>
    <property type="molecule type" value="mRNA"/>
</dbReference>
<dbReference type="EMBL" id="BC091522">
    <property type="protein sequence ID" value="AAH91522.1"/>
    <property type="molecule type" value="mRNA"/>
</dbReference>
<dbReference type="CCDS" id="CCDS2255.1">
    <molecule id="Q9NTK5-1"/>
</dbReference>
<dbReference type="CCDS" id="CCDS42779.1">
    <molecule id="Q9NTK5-2"/>
</dbReference>
<dbReference type="PIR" id="T46901">
    <property type="entry name" value="T46901"/>
</dbReference>
<dbReference type="RefSeq" id="NP_001011708.1">
    <molecule id="Q9NTK5-2"/>
    <property type="nucleotide sequence ID" value="NM_001011708.3"/>
</dbReference>
<dbReference type="RefSeq" id="NP_037473.3">
    <molecule id="Q9NTK5-1"/>
    <property type="nucleotide sequence ID" value="NM_013341.4"/>
</dbReference>
<dbReference type="PDB" id="2OHF">
    <property type="method" value="X-ray"/>
    <property type="resolution" value="2.70 A"/>
    <property type="chains" value="A=1-396"/>
</dbReference>
<dbReference type="PDBsum" id="2OHF"/>
<dbReference type="SMR" id="Q9NTK5"/>
<dbReference type="BioGRID" id="118917">
    <property type="interactions" value="146"/>
</dbReference>
<dbReference type="DIP" id="DIP-34591N"/>
<dbReference type="FunCoup" id="Q9NTK5">
    <property type="interactions" value="1993"/>
</dbReference>
<dbReference type="IntAct" id="Q9NTK5">
    <property type="interactions" value="34"/>
</dbReference>
<dbReference type="MINT" id="Q9NTK5"/>
<dbReference type="STRING" id="9606.ENSP00000284719"/>
<dbReference type="ChEMBL" id="CHEMBL4105704"/>
<dbReference type="GlyGen" id="Q9NTK5">
    <property type="glycosylation" value="1 site, 1 O-linked glycan (1 site)"/>
</dbReference>
<dbReference type="iPTMnet" id="Q9NTK5"/>
<dbReference type="MetOSite" id="Q9NTK5"/>
<dbReference type="PhosphoSitePlus" id="Q9NTK5"/>
<dbReference type="SwissPalm" id="Q9NTK5"/>
<dbReference type="BioMuta" id="OLA1"/>
<dbReference type="DMDM" id="25453240"/>
<dbReference type="OGP" id="Q9NTK5"/>
<dbReference type="jPOST" id="Q9NTK5"/>
<dbReference type="MassIVE" id="Q9NTK5"/>
<dbReference type="PaxDb" id="9606-ENSP00000284719"/>
<dbReference type="PeptideAtlas" id="Q9NTK5"/>
<dbReference type="ProteomicsDB" id="82622">
    <molecule id="Q9NTK5-1"/>
</dbReference>
<dbReference type="ProteomicsDB" id="82623">
    <molecule id="Q9NTK5-2"/>
</dbReference>
<dbReference type="ProteomicsDB" id="82624">
    <molecule id="Q9NTK5-3"/>
</dbReference>
<dbReference type="Pumba" id="Q9NTK5"/>
<dbReference type="Antibodypedia" id="19452">
    <property type="antibodies" value="285 antibodies from 28 providers"/>
</dbReference>
<dbReference type="DNASU" id="29789"/>
<dbReference type="Ensembl" id="ENST00000284719.8">
    <molecule id="Q9NTK5-1"/>
    <property type="protein sequence ID" value="ENSP00000284719.3"/>
    <property type="gene ID" value="ENSG00000138430.16"/>
</dbReference>
<dbReference type="Ensembl" id="ENST00000344357.9">
    <molecule id="Q9NTK5-2"/>
    <property type="protein sequence ID" value="ENSP00000340167.5"/>
    <property type="gene ID" value="ENSG00000138430.16"/>
</dbReference>
<dbReference type="Ensembl" id="ENST00000428402.6">
    <molecule id="Q9NTK5-3"/>
    <property type="protein sequence ID" value="ENSP00000410385.2"/>
    <property type="gene ID" value="ENSG00000138430.16"/>
</dbReference>
<dbReference type="GeneID" id="29789"/>
<dbReference type="KEGG" id="hsa:29789"/>
<dbReference type="MANE-Select" id="ENST00000284719.8">
    <property type="protein sequence ID" value="ENSP00000284719.3"/>
    <property type="RefSeq nucleotide sequence ID" value="NM_013341.5"/>
    <property type="RefSeq protein sequence ID" value="NP_037473.3"/>
</dbReference>
<dbReference type="UCSC" id="uc002uih.4">
    <molecule id="Q9NTK5-1"/>
    <property type="organism name" value="human"/>
</dbReference>
<dbReference type="AGR" id="HGNC:28833"/>
<dbReference type="CTD" id="29789"/>
<dbReference type="DisGeNET" id="29789"/>
<dbReference type="GeneCards" id="OLA1"/>
<dbReference type="HGNC" id="HGNC:28833">
    <property type="gene designation" value="OLA1"/>
</dbReference>
<dbReference type="HPA" id="ENSG00000138430">
    <property type="expression patterns" value="Low tissue specificity"/>
</dbReference>
<dbReference type="MIM" id="611175">
    <property type="type" value="gene"/>
</dbReference>
<dbReference type="neXtProt" id="NX_Q9NTK5"/>
<dbReference type="OpenTargets" id="ENSG00000138430"/>
<dbReference type="PharmGKB" id="PA162398388"/>
<dbReference type="VEuPathDB" id="HostDB:ENSG00000138430"/>
<dbReference type="eggNOG" id="KOG1491">
    <property type="taxonomic scope" value="Eukaryota"/>
</dbReference>
<dbReference type="GeneTree" id="ENSGT00390000000673"/>
<dbReference type="HOGENOM" id="CLU_018395_1_0_1"/>
<dbReference type="InParanoid" id="Q9NTK5"/>
<dbReference type="OrthoDB" id="424823at2759"/>
<dbReference type="PAN-GO" id="Q9NTK5">
    <property type="GO annotations" value="2 GO annotations based on evolutionary models"/>
</dbReference>
<dbReference type="PhylomeDB" id="Q9NTK5"/>
<dbReference type="TreeFam" id="TF300774"/>
<dbReference type="PathwayCommons" id="Q9NTK5"/>
<dbReference type="Reactome" id="R-HSA-114608">
    <property type="pathway name" value="Platelet degranulation"/>
</dbReference>
<dbReference type="SignaLink" id="Q9NTK5"/>
<dbReference type="BioGRID-ORCS" id="29789">
    <property type="hits" value="178 hits in 1157 CRISPR screens"/>
</dbReference>
<dbReference type="CD-CODE" id="8C2F96ED">
    <property type="entry name" value="Centrosome"/>
</dbReference>
<dbReference type="CD-CODE" id="91857CE7">
    <property type="entry name" value="Nucleolus"/>
</dbReference>
<dbReference type="CD-CODE" id="FB4E32DD">
    <property type="entry name" value="Presynaptic clusters and postsynaptic densities"/>
</dbReference>
<dbReference type="ChiTaRS" id="OLA1">
    <property type="organism name" value="human"/>
</dbReference>
<dbReference type="EvolutionaryTrace" id="Q9NTK5"/>
<dbReference type="GeneWiki" id="OLA1"/>
<dbReference type="GenomeRNAi" id="29789"/>
<dbReference type="Pharos" id="Q9NTK5">
    <property type="development level" value="Tchem"/>
</dbReference>
<dbReference type="PRO" id="PR:Q9NTK5"/>
<dbReference type="Proteomes" id="UP000005640">
    <property type="component" value="Chromosome 2"/>
</dbReference>
<dbReference type="RNAct" id="Q9NTK5">
    <property type="molecule type" value="protein"/>
</dbReference>
<dbReference type="Bgee" id="ENSG00000138430">
    <property type="expression patterns" value="Expressed in cervix squamous epithelium and 212 other cell types or tissues"/>
</dbReference>
<dbReference type="ExpressionAtlas" id="Q9NTK5">
    <property type="expression patterns" value="baseline and differential"/>
</dbReference>
<dbReference type="GO" id="GO:0005813">
    <property type="term" value="C:centrosome"/>
    <property type="evidence" value="ECO:0000314"/>
    <property type="project" value="HPA"/>
</dbReference>
<dbReference type="GO" id="GO:0005737">
    <property type="term" value="C:cytoplasm"/>
    <property type="evidence" value="ECO:0000314"/>
    <property type="project" value="LIFEdb"/>
</dbReference>
<dbReference type="GO" id="GO:0005829">
    <property type="term" value="C:cytosol"/>
    <property type="evidence" value="ECO:0000314"/>
    <property type="project" value="HPA"/>
</dbReference>
<dbReference type="GO" id="GO:0070062">
    <property type="term" value="C:extracellular exosome"/>
    <property type="evidence" value="ECO:0007005"/>
    <property type="project" value="UniProtKB"/>
</dbReference>
<dbReference type="GO" id="GO:0005576">
    <property type="term" value="C:extracellular region"/>
    <property type="evidence" value="ECO:0000304"/>
    <property type="project" value="Reactome"/>
</dbReference>
<dbReference type="GO" id="GO:0016020">
    <property type="term" value="C:membrane"/>
    <property type="evidence" value="ECO:0007005"/>
    <property type="project" value="UniProtKB"/>
</dbReference>
<dbReference type="GO" id="GO:0005730">
    <property type="term" value="C:nucleolus"/>
    <property type="evidence" value="ECO:0007669"/>
    <property type="project" value="UniProtKB-SubCell"/>
</dbReference>
<dbReference type="GO" id="GO:0031093">
    <property type="term" value="C:platelet alpha granule lumen"/>
    <property type="evidence" value="ECO:0000304"/>
    <property type="project" value="Reactome"/>
</dbReference>
<dbReference type="GO" id="GO:0005524">
    <property type="term" value="F:ATP binding"/>
    <property type="evidence" value="ECO:0000314"/>
    <property type="project" value="HGNC-UCL"/>
</dbReference>
<dbReference type="GO" id="GO:0016887">
    <property type="term" value="F:ATP hydrolysis activity"/>
    <property type="evidence" value="ECO:0000314"/>
    <property type="project" value="BHF-UCL"/>
</dbReference>
<dbReference type="GO" id="GO:0045296">
    <property type="term" value="F:cadherin binding"/>
    <property type="evidence" value="ECO:0007005"/>
    <property type="project" value="BHF-UCL"/>
</dbReference>
<dbReference type="GO" id="GO:0005525">
    <property type="term" value="F:GTP binding"/>
    <property type="evidence" value="ECO:0007669"/>
    <property type="project" value="InterPro"/>
</dbReference>
<dbReference type="GO" id="GO:0046872">
    <property type="term" value="F:metal ion binding"/>
    <property type="evidence" value="ECO:0007669"/>
    <property type="project" value="UniProtKB-KW"/>
</dbReference>
<dbReference type="GO" id="GO:0043023">
    <property type="term" value="F:ribosomal large subunit binding"/>
    <property type="evidence" value="ECO:0007669"/>
    <property type="project" value="UniProtKB-UniRule"/>
</dbReference>
<dbReference type="GO" id="GO:0046034">
    <property type="term" value="P:ATP metabolic process"/>
    <property type="evidence" value="ECO:0000314"/>
    <property type="project" value="BHF-UCL"/>
</dbReference>
<dbReference type="CDD" id="cd04867">
    <property type="entry name" value="TGS_YchF_OLA1"/>
    <property type="match status" value="1"/>
</dbReference>
<dbReference type="CDD" id="cd01900">
    <property type="entry name" value="YchF"/>
    <property type="match status" value="1"/>
</dbReference>
<dbReference type="FunFam" id="1.10.150.300:FF:000003">
    <property type="entry name" value="Obg-like ATPase 1"/>
    <property type="match status" value="1"/>
</dbReference>
<dbReference type="FunFam" id="3.10.20.30:FF:000029">
    <property type="entry name" value="Obg-like ATPase 1"/>
    <property type="match status" value="1"/>
</dbReference>
<dbReference type="Gene3D" id="3.10.20.30">
    <property type="match status" value="1"/>
</dbReference>
<dbReference type="Gene3D" id="3.40.50.300">
    <property type="entry name" value="P-loop containing nucleotide triphosphate hydrolases"/>
    <property type="match status" value="1"/>
</dbReference>
<dbReference type="Gene3D" id="1.10.150.300">
    <property type="entry name" value="TGS-like domain"/>
    <property type="match status" value="1"/>
</dbReference>
<dbReference type="HAMAP" id="MF_00944">
    <property type="entry name" value="YchF_OLA1_ATPase"/>
    <property type="match status" value="1"/>
</dbReference>
<dbReference type="InterPro" id="IPR004396">
    <property type="entry name" value="ATPase_YchF/OLA1"/>
</dbReference>
<dbReference type="InterPro" id="IPR012675">
    <property type="entry name" value="Beta-grasp_dom_sf"/>
</dbReference>
<dbReference type="InterPro" id="IPR031167">
    <property type="entry name" value="G_OBG"/>
</dbReference>
<dbReference type="InterPro" id="IPR006073">
    <property type="entry name" value="GTP-bd"/>
</dbReference>
<dbReference type="InterPro" id="IPR027417">
    <property type="entry name" value="P-loop_NTPase"/>
</dbReference>
<dbReference type="InterPro" id="IPR004095">
    <property type="entry name" value="TGS"/>
</dbReference>
<dbReference type="InterPro" id="IPR012676">
    <property type="entry name" value="TGS-like"/>
</dbReference>
<dbReference type="InterPro" id="IPR023192">
    <property type="entry name" value="TGS-like_dom_sf"/>
</dbReference>
<dbReference type="InterPro" id="IPR013029">
    <property type="entry name" value="YchF_C"/>
</dbReference>
<dbReference type="InterPro" id="IPR041706">
    <property type="entry name" value="YchF_N"/>
</dbReference>
<dbReference type="NCBIfam" id="TIGR00092">
    <property type="entry name" value="redox-regulated ATPase YchF"/>
    <property type="match status" value="1"/>
</dbReference>
<dbReference type="PANTHER" id="PTHR23305">
    <property type="entry name" value="OBG GTPASE FAMILY"/>
    <property type="match status" value="1"/>
</dbReference>
<dbReference type="PANTHER" id="PTHR23305:SF11">
    <property type="entry name" value="OBG-LIKE ATPASE 1"/>
    <property type="match status" value="1"/>
</dbReference>
<dbReference type="Pfam" id="PF01926">
    <property type="entry name" value="MMR_HSR1"/>
    <property type="match status" value="1"/>
</dbReference>
<dbReference type="Pfam" id="PF06071">
    <property type="entry name" value="YchF-GTPase_C"/>
    <property type="match status" value="1"/>
</dbReference>
<dbReference type="PIRSF" id="PIRSF006641">
    <property type="entry name" value="CHP00092"/>
    <property type="match status" value="1"/>
</dbReference>
<dbReference type="PRINTS" id="PR00326">
    <property type="entry name" value="GTP1OBG"/>
</dbReference>
<dbReference type="SUPFAM" id="SSF52540">
    <property type="entry name" value="P-loop containing nucleoside triphosphate hydrolases"/>
    <property type="match status" value="1"/>
</dbReference>
<dbReference type="SUPFAM" id="SSF81271">
    <property type="entry name" value="TGS-like"/>
    <property type="match status" value="1"/>
</dbReference>
<dbReference type="PROSITE" id="PS51710">
    <property type="entry name" value="G_OBG"/>
    <property type="match status" value="1"/>
</dbReference>
<dbReference type="PROSITE" id="PS51880">
    <property type="entry name" value="TGS"/>
    <property type="match status" value="1"/>
</dbReference>
<protein>
    <recommendedName>
        <fullName evidence="1">Obg-like ATPase 1</fullName>
    </recommendedName>
    <alternativeName>
        <fullName>DNA damage-regulated overexpressed in cancer 45</fullName>
        <shortName>DOC45</shortName>
    </alternativeName>
    <alternativeName>
        <fullName>GTP-binding protein 9</fullName>
    </alternativeName>
</protein>
<comment type="function">
    <text evidence="1">Hydrolyzes ATP, and can also hydrolyze GTP with lower efficiency. Has lower affinity for GTP.</text>
</comment>
<comment type="cofactor">
    <cofactor evidence="2">
        <name>Mg(2+)</name>
        <dbReference type="ChEBI" id="CHEBI:18420"/>
    </cofactor>
</comment>
<comment type="subunit">
    <text evidence="1 5">Monomer.</text>
</comment>
<comment type="interaction">
    <interactant intactId="EBI-766468">
        <id>Q9NTK5</id>
    </interactant>
    <interactant intactId="EBI-6179719">
        <id>PRO_0000038593</id>
        <label>gag</label>
        <dbReference type="UniProtKB" id="P04591"/>
    </interactant>
    <organismsDiffer>true</organismsDiffer>
    <experiments>4</experiments>
</comment>
<comment type="subcellular location">
    <subcellularLocation>
        <location evidence="1 6">Cytoplasm</location>
    </subcellularLocation>
    <subcellularLocation>
        <location evidence="1 6">Nucleus</location>
    </subcellularLocation>
    <subcellularLocation>
        <location evidence="1 6">Nucleus</location>
        <location evidence="1 6">Nucleolus</location>
    </subcellularLocation>
    <text evidence="1">Predominantly cytoplasmic, shuttles between the nucleus and the cytoplasm.</text>
</comment>
<comment type="alternative products">
    <event type="alternative splicing"/>
    <isoform>
        <id>Q9NTK5-1</id>
        <name>1</name>
        <sequence type="displayed"/>
    </isoform>
    <isoform>
        <id>Q9NTK5-2</id>
        <name>2</name>
        <sequence type="described" ref="VSP_002049"/>
    </isoform>
    <isoform>
        <id>Q9NTK5-3</id>
        <name>3</name>
        <sequence type="described" ref="VSP_002050 VSP_002051"/>
    </isoform>
</comment>
<comment type="tissue specificity">
    <text>Expressed in all tissues tested but its expression is more abundant in testis, liver, lung, and brain. Overexpressed in several malignancies, including cancers of the colon, rectum, ovary, lung, stomach, and uterus.</text>
</comment>
<comment type="induction">
    <text evidence="6">Strongly down-regulated by DNA damage-inducing agents.</text>
</comment>
<comment type="similarity">
    <text evidence="1">Belongs to the TRAFAC class OBG-HflX-like GTPase superfamily. OBG GTPase family. YchF/OLA1 subfamily.</text>
</comment>
<evidence type="ECO:0000255" key="1">
    <source>
        <dbReference type="HAMAP-Rule" id="MF_03167"/>
    </source>
</evidence>
<evidence type="ECO:0000255" key="2">
    <source>
        <dbReference type="PROSITE-ProRule" id="PRU01047"/>
    </source>
</evidence>
<evidence type="ECO:0000255" key="3">
    <source>
        <dbReference type="PROSITE-ProRule" id="PRU01228"/>
    </source>
</evidence>
<evidence type="ECO:0000269" key="4">
    <source>
    </source>
</evidence>
<evidence type="ECO:0000269" key="5">
    <source>
    </source>
</evidence>
<evidence type="ECO:0000269" key="6">
    <source>
    </source>
</evidence>
<evidence type="ECO:0000303" key="7">
    <source>
    </source>
</evidence>
<evidence type="ECO:0000303" key="8">
    <source>
    </source>
</evidence>
<evidence type="ECO:0000303" key="9">
    <source ref="5"/>
</evidence>
<evidence type="ECO:0000305" key="10"/>
<evidence type="ECO:0000305" key="11">
    <source>
    </source>
</evidence>
<evidence type="ECO:0007744" key="12">
    <source>
    </source>
</evidence>
<evidence type="ECO:0007829" key="13">
    <source>
        <dbReference type="PDB" id="2OHF"/>
    </source>
</evidence>
<proteinExistence type="evidence at protein level"/>
<sequence>MPPKKGGDGIKPPPIIGRFGTSLKIGIVGLPNVGKSTFFNVLTNSQASAENFPFCTIDPNESRVPVPDERFDFLCQYHKPASKIPAFLNVVDIAGLVKGAHNGQGLGNAFLSHISACDGIFHLTRAFEDDDITHVEGSVDPIRDIEIIHEELQLKDEEMIGPIIDKLEKVAVRGGDKKLKPEYDIMCKVKSWVIDQKKPVRFYHDWNDKEIEVLNKHLFLTSKPMVYLVNLSEKDYIRKKNKWLIKIKEWVDKYDPGALVIPFSGALELKLQELSAEERQKYLEANMTQSALPKIIKAGFAALQLEYFFTAGPDEVRAWTIRKGTKAPQAAGKIHTDFEKGFIMAEVMKYEDFKEEGSENAVKAAGKYRQQGRNYIVEDGDIIFFKFNTPQQPKKK</sequence>
<gene>
    <name evidence="1" type="primary">OLA1</name>
    <name type="synonym">GTPBP9</name>
    <name type="ORF">PRO2455</name>
    <name type="ORF">PTD004</name>
</gene>